<feature type="chain" id="PRO_0000212421" description="Pre-mRNA-splicing factor SLT11">
    <location>
        <begin position="1"/>
        <end position="331"/>
    </location>
</feature>
<feature type="region of interest" description="Disordered" evidence="2">
    <location>
        <begin position="288"/>
        <end position="331"/>
    </location>
</feature>
<feature type="compositionally biased region" description="Low complexity" evidence="2">
    <location>
        <begin position="293"/>
        <end position="309"/>
    </location>
</feature>
<feature type="compositionally biased region" description="Basic residues" evidence="2">
    <location>
        <begin position="310"/>
        <end position="325"/>
    </location>
</feature>
<protein>
    <recommendedName>
        <fullName>Pre-mRNA-splicing factor SLT11</fullName>
    </recommendedName>
</protein>
<evidence type="ECO:0000250" key="1"/>
<evidence type="ECO:0000256" key="2">
    <source>
        <dbReference type="SAM" id="MobiDB-lite"/>
    </source>
</evidence>
<evidence type="ECO:0000305" key="3"/>
<accession>Q750K9</accession>
<dbReference type="EMBL" id="AE016820">
    <property type="protein sequence ID" value="AAS54521.1"/>
    <property type="molecule type" value="Genomic_DNA"/>
</dbReference>
<dbReference type="RefSeq" id="NP_986697.1">
    <property type="nucleotide sequence ID" value="NM_211759.1"/>
</dbReference>
<dbReference type="SMR" id="Q750K9"/>
<dbReference type="FunCoup" id="Q750K9">
    <property type="interactions" value="173"/>
</dbReference>
<dbReference type="STRING" id="284811.Q750K9"/>
<dbReference type="EnsemblFungi" id="AAS54521">
    <property type="protein sequence ID" value="AAS54521"/>
    <property type="gene ID" value="AGOS_AGR032W"/>
</dbReference>
<dbReference type="GeneID" id="4622997"/>
<dbReference type="KEGG" id="ago:AGOS_AGR032W"/>
<dbReference type="eggNOG" id="KOG0153">
    <property type="taxonomic scope" value="Eukaryota"/>
</dbReference>
<dbReference type="HOGENOM" id="CLU_027112_1_1_1"/>
<dbReference type="InParanoid" id="Q750K9"/>
<dbReference type="OMA" id="RNVCQCC"/>
<dbReference type="OrthoDB" id="10259600at2759"/>
<dbReference type="Proteomes" id="UP000000591">
    <property type="component" value="Chromosome VII"/>
</dbReference>
<dbReference type="GO" id="GO:0000974">
    <property type="term" value="C:Prp19 complex"/>
    <property type="evidence" value="ECO:0000318"/>
    <property type="project" value="GO_Central"/>
</dbReference>
<dbReference type="GO" id="GO:0071006">
    <property type="term" value="C:U2-type catalytic step 1 spliceosome"/>
    <property type="evidence" value="ECO:0000318"/>
    <property type="project" value="GO_Central"/>
</dbReference>
<dbReference type="GO" id="GO:0071007">
    <property type="term" value="C:U2-type catalytic step 2 spliceosome"/>
    <property type="evidence" value="ECO:0000318"/>
    <property type="project" value="GO_Central"/>
</dbReference>
<dbReference type="GO" id="GO:0036002">
    <property type="term" value="F:pre-mRNA binding"/>
    <property type="evidence" value="ECO:0000318"/>
    <property type="project" value="GO_Central"/>
</dbReference>
<dbReference type="GO" id="GO:0017070">
    <property type="term" value="F:U6 snRNA binding"/>
    <property type="evidence" value="ECO:0000318"/>
    <property type="project" value="GO_Central"/>
</dbReference>
<dbReference type="GO" id="GO:0000398">
    <property type="term" value="P:mRNA splicing, via spliceosome"/>
    <property type="evidence" value="ECO:0007669"/>
    <property type="project" value="EnsemblFungi"/>
</dbReference>
<dbReference type="CDD" id="cd12265">
    <property type="entry name" value="RRM_SLT11"/>
    <property type="match status" value="1"/>
</dbReference>
<dbReference type="InterPro" id="IPR039171">
    <property type="entry name" value="Cwc2/Slt11"/>
</dbReference>
<dbReference type="InterPro" id="IPR034356">
    <property type="entry name" value="Slt11_RRM"/>
</dbReference>
<dbReference type="InterPro" id="IPR048995">
    <property type="entry name" value="STL11/RBM22-like_N"/>
</dbReference>
<dbReference type="PANTHER" id="PTHR14089">
    <property type="entry name" value="PRE-MRNA-SPLICING FACTOR RBM22"/>
    <property type="match status" value="1"/>
</dbReference>
<dbReference type="PANTHER" id="PTHR14089:SF6">
    <property type="entry name" value="PRE-MRNA-SPLICING FACTOR RBM22"/>
    <property type="match status" value="1"/>
</dbReference>
<dbReference type="Pfam" id="PF21369">
    <property type="entry name" value="STL11_N"/>
    <property type="match status" value="1"/>
</dbReference>
<sequence>MDEETPSICEQCLTDADLRMTRAARGAECKICTLPFTLYHFKPPGAPRVTKTLVCRRCAAQRNVCQCCMLDLAWKLPVALRDELVSLVQGSDERTPEASNEMVRRFLALRGGQLGGARLTADSAPLRELMGKMRAVAAAAAPAARAHGGREDAGEVPETQLPFGGALATPASRSFFIYGVDPALPEWELVDAVSQLVRTPDWRDAGSVSVVVRQDARCAGIRFRREELAQAFVARLETLPAAAGAPKGVLRIRHLRMHVVAWPEFHLAAFGETKQQTEGIARLATKTMRADAEGASPARPAAPASAAGKVAKKAAAPRRQGRRGPRPTLEL</sequence>
<organism>
    <name type="scientific">Eremothecium gossypii (strain ATCC 10895 / CBS 109.51 / FGSC 9923 / NRRL Y-1056)</name>
    <name type="common">Yeast</name>
    <name type="synonym">Ashbya gossypii</name>
    <dbReference type="NCBI Taxonomy" id="284811"/>
    <lineage>
        <taxon>Eukaryota</taxon>
        <taxon>Fungi</taxon>
        <taxon>Dikarya</taxon>
        <taxon>Ascomycota</taxon>
        <taxon>Saccharomycotina</taxon>
        <taxon>Saccharomycetes</taxon>
        <taxon>Saccharomycetales</taxon>
        <taxon>Saccharomycetaceae</taxon>
        <taxon>Eremothecium</taxon>
    </lineage>
</organism>
<keyword id="KW-0507">mRNA processing</keyword>
<keyword id="KW-0508">mRNA splicing</keyword>
<keyword id="KW-0539">Nucleus</keyword>
<keyword id="KW-1185">Reference proteome</keyword>
<keyword id="KW-0694">RNA-binding</keyword>
<keyword id="KW-0747">Spliceosome</keyword>
<name>SLT11_EREGS</name>
<reference key="1">
    <citation type="journal article" date="2004" name="Science">
        <title>The Ashbya gossypii genome as a tool for mapping the ancient Saccharomyces cerevisiae genome.</title>
        <authorList>
            <person name="Dietrich F.S."/>
            <person name="Voegeli S."/>
            <person name="Brachat S."/>
            <person name="Lerch A."/>
            <person name="Gates K."/>
            <person name="Steiner S."/>
            <person name="Mohr C."/>
            <person name="Poehlmann R."/>
            <person name="Luedi P."/>
            <person name="Choi S."/>
            <person name="Wing R.A."/>
            <person name="Flavier A."/>
            <person name="Gaffney T.D."/>
            <person name="Philippsen P."/>
        </authorList>
    </citation>
    <scope>NUCLEOTIDE SEQUENCE [LARGE SCALE GENOMIC DNA]</scope>
    <source>
        <strain>ATCC 10895 / CBS 109.51 / FGSC 9923 / NRRL Y-1056</strain>
    </source>
</reference>
<reference key="2">
    <citation type="journal article" date="2013" name="G3 (Bethesda)">
        <title>Genomes of Ashbya fungi isolated from insects reveal four mating-type loci, numerous translocations, lack of transposons, and distinct gene duplications.</title>
        <authorList>
            <person name="Dietrich F.S."/>
            <person name="Voegeli S."/>
            <person name="Kuo S."/>
            <person name="Philippsen P."/>
        </authorList>
    </citation>
    <scope>GENOME REANNOTATION</scope>
    <source>
        <strain>ATCC 10895 / CBS 109.51 / FGSC 9923 / NRRL Y-1056</strain>
    </source>
</reference>
<comment type="function">
    <text evidence="1">Involved in pre-mRNA splicing. Facilitates the cooperative formation of U2/U6 helix II in association with stem II in the spliceosome. Binds to RNA (By similarity).</text>
</comment>
<comment type="subunit">
    <text evidence="1">Associated with the spliceosome.</text>
</comment>
<comment type="subcellular location">
    <subcellularLocation>
        <location evidence="1">Nucleus</location>
    </subcellularLocation>
</comment>
<comment type="similarity">
    <text evidence="3">Belongs to the SLT11 family.</text>
</comment>
<gene>
    <name type="primary">SLT11</name>
    <name type="ordered locus">AGR032W</name>
</gene>
<proteinExistence type="inferred from homology"/>